<name>RL31B_BURVG</name>
<organism>
    <name type="scientific">Burkholderia vietnamiensis (strain G4 / LMG 22486)</name>
    <name type="common">Burkholderia cepacia (strain R1808)</name>
    <dbReference type="NCBI Taxonomy" id="269482"/>
    <lineage>
        <taxon>Bacteria</taxon>
        <taxon>Pseudomonadati</taxon>
        <taxon>Pseudomonadota</taxon>
        <taxon>Betaproteobacteria</taxon>
        <taxon>Burkholderiales</taxon>
        <taxon>Burkholderiaceae</taxon>
        <taxon>Burkholderia</taxon>
        <taxon>Burkholderia cepacia complex</taxon>
    </lineage>
</organism>
<dbReference type="EMBL" id="CP000614">
    <property type="protein sequence ID" value="ABO54764.1"/>
    <property type="molecule type" value="Genomic_DNA"/>
</dbReference>
<dbReference type="SMR" id="A4JER1"/>
<dbReference type="KEGG" id="bvi:Bcep1808_1760"/>
<dbReference type="eggNOG" id="COG0254">
    <property type="taxonomic scope" value="Bacteria"/>
</dbReference>
<dbReference type="HOGENOM" id="CLU_114306_2_1_4"/>
<dbReference type="Proteomes" id="UP000002287">
    <property type="component" value="Chromosome 1"/>
</dbReference>
<dbReference type="GO" id="GO:1990904">
    <property type="term" value="C:ribonucleoprotein complex"/>
    <property type="evidence" value="ECO:0007669"/>
    <property type="project" value="UniProtKB-KW"/>
</dbReference>
<dbReference type="GO" id="GO:0005840">
    <property type="term" value="C:ribosome"/>
    <property type="evidence" value="ECO:0007669"/>
    <property type="project" value="UniProtKB-KW"/>
</dbReference>
<dbReference type="GO" id="GO:0003735">
    <property type="term" value="F:structural constituent of ribosome"/>
    <property type="evidence" value="ECO:0007669"/>
    <property type="project" value="InterPro"/>
</dbReference>
<dbReference type="GO" id="GO:0006412">
    <property type="term" value="P:translation"/>
    <property type="evidence" value="ECO:0007669"/>
    <property type="project" value="UniProtKB-UniRule"/>
</dbReference>
<dbReference type="Gene3D" id="4.10.830.30">
    <property type="entry name" value="Ribosomal protein L31"/>
    <property type="match status" value="1"/>
</dbReference>
<dbReference type="HAMAP" id="MF_00502">
    <property type="entry name" value="Ribosomal_bL31_2"/>
    <property type="match status" value="1"/>
</dbReference>
<dbReference type="InterPro" id="IPR034704">
    <property type="entry name" value="Ribosomal_bL28/bL31-like_sf"/>
</dbReference>
<dbReference type="InterPro" id="IPR002150">
    <property type="entry name" value="Ribosomal_bL31"/>
</dbReference>
<dbReference type="InterPro" id="IPR027493">
    <property type="entry name" value="Ribosomal_bL31_B"/>
</dbReference>
<dbReference type="InterPro" id="IPR042105">
    <property type="entry name" value="Ribosomal_bL31_sf"/>
</dbReference>
<dbReference type="NCBIfam" id="TIGR00105">
    <property type="entry name" value="L31"/>
    <property type="match status" value="1"/>
</dbReference>
<dbReference type="NCBIfam" id="NF002462">
    <property type="entry name" value="PRK01678.1"/>
    <property type="match status" value="1"/>
</dbReference>
<dbReference type="PANTHER" id="PTHR33280">
    <property type="entry name" value="50S RIBOSOMAL PROTEIN L31, CHLOROPLASTIC"/>
    <property type="match status" value="1"/>
</dbReference>
<dbReference type="PANTHER" id="PTHR33280:SF1">
    <property type="entry name" value="LARGE RIBOSOMAL SUBUNIT PROTEIN BL31C"/>
    <property type="match status" value="1"/>
</dbReference>
<dbReference type="Pfam" id="PF01197">
    <property type="entry name" value="Ribosomal_L31"/>
    <property type="match status" value="1"/>
</dbReference>
<dbReference type="PRINTS" id="PR01249">
    <property type="entry name" value="RIBOSOMALL31"/>
</dbReference>
<dbReference type="SUPFAM" id="SSF143800">
    <property type="entry name" value="L28p-like"/>
    <property type="match status" value="1"/>
</dbReference>
<protein>
    <recommendedName>
        <fullName evidence="1">Large ribosomal subunit protein bL31B</fullName>
    </recommendedName>
    <alternativeName>
        <fullName evidence="2">50S ribosomal protein L31 type B</fullName>
    </alternativeName>
</protein>
<proteinExistence type="inferred from homology"/>
<accession>A4JER1</accession>
<comment type="subunit">
    <text evidence="1">Part of the 50S ribosomal subunit.</text>
</comment>
<comment type="similarity">
    <text evidence="1">Belongs to the bacterial ribosomal protein bL31 family. Type B subfamily.</text>
</comment>
<evidence type="ECO:0000255" key="1">
    <source>
        <dbReference type="HAMAP-Rule" id="MF_00502"/>
    </source>
</evidence>
<evidence type="ECO:0000305" key="2"/>
<gene>
    <name evidence="1" type="primary">rpmE2</name>
    <name type="ordered locus">Bcep1808_1760</name>
</gene>
<reference key="1">
    <citation type="submission" date="2007-03" db="EMBL/GenBank/DDBJ databases">
        <title>Complete sequence of chromosome 1 of Burkholderia vietnamiensis G4.</title>
        <authorList>
            <consortium name="US DOE Joint Genome Institute"/>
            <person name="Copeland A."/>
            <person name="Lucas S."/>
            <person name="Lapidus A."/>
            <person name="Barry K."/>
            <person name="Detter J.C."/>
            <person name="Glavina del Rio T."/>
            <person name="Hammon N."/>
            <person name="Israni S."/>
            <person name="Dalin E."/>
            <person name="Tice H."/>
            <person name="Pitluck S."/>
            <person name="Chain P."/>
            <person name="Malfatti S."/>
            <person name="Shin M."/>
            <person name="Vergez L."/>
            <person name="Schmutz J."/>
            <person name="Larimer F."/>
            <person name="Land M."/>
            <person name="Hauser L."/>
            <person name="Kyrpides N."/>
            <person name="Tiedje J."/>
            <person name="Richardson P."/>
        </authorList>
    </citation>
    <scope>NUCLEOTIDE SEQUENCE [LARGE SCALE GENOMIC DNA]</scope>
    <source>
        <strain>G4 / LMG 22486</strain>
    </source>
</reference>
<keyword id="KW-0687">Ribonucleoprotein</keyword>
<keyword id="KW-0689">Ribosomal protein</keyword>
<feature type="chain" id="PRO_1000014693" description="Large ribosomal subunit protein bL31B">
    <location>
        <begin position="1"/>
        <end position="87"/>
    </location>
</feature>
<sequence length="87" mass="9885">MKPGIHPDYREVVFQDMSNGFKFITRSTIQTRETIDHEGKTYPLAKIEVSSESHSFYTGQQKIMDTAGRVEKFKNKFGARASGKVAK</sequence>